<protein>
    <recommendedName>
        <fullName>Uncharacterized protein YdhL</fullName>
    </recommendedName>
</protein>
<evidence type="ECO:0000305" key="1"/>
<sequence>MAEQLEFFPVQSPCRGICQSDERGFCRGCFRSRDERFNWNKMSDGEKQEVLRLCRQRLMRKLRANKPASSDEPEQPSLF</sequence>
<keyword id="KW-1185">Reference proteome</keyword>
<gene>
    <name type="primary">ydhL</name>
    <name type="ordered locus">SF1675</name>
    <name type="ordered locus">S1808</name>
</gene>
<organism>
    <name type="scientific">Shigella flexneri</name>
    <dbReference type="NCBI Taxonomy" id="623"/>
    <lineage>
        <taxon>Bacteria</taxon>
        <taxon>Pseudomonadati</taxon>
        <taxon>Pseudomonadota</taxon>
        <taxon>Gammaproteobacteria</taxon>
        <taxon>Enterobacterales</taxon>
        <taxon>Enterobacteriaceae</taxon>
        <taxon>Shigella</taxon>
    </lineage>
</organism>
<feature type="chain" id="PRO_0000013853" description="Uncharacterized protein YdhL">
    <location>
        <begin position="1"/>
        <end position="79"/>
    </location>
</feature>
<comment type="sequence caution" evidence="1">
    <conflict type="erroneous initiation">
        <sequence resource="EMBL-CDS" id="AAN43256"/>
    </conflict>
</comment>
<comment type="sequence caution" evidence="1">
    <conflict type="erroneous initiation">
        <sequence resource="EMBL-CDS" id="AAP17142"/>
    </conflict>
</comment>
<name>YDHL_SHIFL</name>
<accession>P64475</accession>
<accession>P76188</accession>
<reference key="1">
    <citation type="journal article" date="2002" name="Nucleic Acids Res.">
        <title>Genome sequence of Shigella flexneri 2a: insights into pathogenicity through comparison with genomes of Escherichia coli K12 and O157.</title>
        <authorList>
            <person name="Jin Q."/>
            <person name="Yuan Z."/>
            <person name="Xu J."/>
            <person name="Wang Y."/>
            <person name="Shen Y."/>
            <person name="Lu W."/>
            <person name="Wang J."/>
            <person name="Liu H."/>
            <person name="Yang J."/>
            <person name="Yang F."/>
            <person name="Zhang X."/>
            <person name="Zhang J."/>
            <person name="Yang G."/>
            <person name="Wu H."/>
            <person name="Qu D."/>
            <person name="Dong J."/>
            <person name="Sun L."/>
            <person name="Xue Y."/>
            <person name="Zhao A."/>
            <person name="Gao Y."/>
            <person name="Zhu J."/>
            <person name="Kan B."/>
            <person name="Ding K."/>
            <person name="Chen S."/>
            <person name="Cheng H."/>
            <person name="Yao Z."/>
            <person name="He B."/>
            <person name="Chen R."/>
            <person name="Ma D."/>
            <person name="Qiang B."/>
            <person name="Wen Y."/>
            <person name="Hou Y."/>
            <person name="Yu J."/>
        </authorList>
    </citation>
    <scope>NUCLEOTIDE SEQUENCE [LARGE SCALE GENOMIC DNA]</scope>
    <source>
        <strain>301 / Serotype 2a</strain>
    </source>
</reference>
<reference key="2">
    <citation type="journal article" date="2003" name="Infect. Immun.">
        <title>Complete genome sequence and comparative genomics of Shigella flexneri serotype 2a strain 2457T.</title>
        <authorList>
            <person name="Wei J."/>
            <person name="Goldberg M.B."/>
            <person name="Burland V."/>
            <person name="Venkatesan M.M."/>
            <person name="Deng W."/>
            <person name="Fournier G."/>
            <person name="Mayhew G.F."/>
            <person name="Plunkett G. III"/>
            <person name="Rose D.J."/>
            <person name="Darling A."/>
            <person name="Mau B."/>
            <person name="Perna N.T."/>
            <person name="Payne S.M."/>
            <person name="Runyen-Janecky L.J."/>
            <person name="Zhou S."/>
            <person name="Schwartz D.C."/>
            <person name="Blattner F.R."/>
        </authorList>
    </citation>
    <scope>NUCLEOTIDE SEQUENCE [LARGE SCALE GENOMIC DNA]</scope>
    <source>
        <strain>ATCC 700930 / 2457T / Serotype 2a</strain>
    </source>
</reference>
<proteinExistence type="predicted"/>
<dbReference type="EMBL" id="AE005674">
    <property type="protein sequence ID" value="AAN43256.2"/>
    <property type="status" value="ALT_INIT"/>
    <property type="molecule type" value="Genomic_DNA"/>
</dbReference>
<dbReference type="EMBL" id="AE014073">
    <property type="protein sequence ID" value="AAP17142.1"/>
    <property type="status" value="ALT_INIT"/>
    <property type="molecule type" value="Genomic_DNA"/>
</dbReference>
<dbReference type="RefSeq" id="NP_707549.2">
    <property type="nucleotide sequence ID" value="NC_004337.2"/>
</dbReference>
<dbReference type="RefSeq" id="WP_000840481.1">
    <property type="nucleotide sequence ID" value="NZ_WPGW01000025.1"/>
</dbReference>
<dbReference type="SMR" id="P64475"/>
<dbReference type="STRING" id="198214.SF1675"/>
<dbReference type="PaxDb" id="198214-SF1675"/>
<dbReference type="GeneID" id="1024856"/>
<dbReference type="KEGG" id="sfl:SF1675"/>
<dbReference type="KEGG" id="sfx:S1808"/>
<dbReference type="PATRIC" id="fig|623.156.peg.210"/>
<dbReference type="HOGENOM" id="CLU_162538_0_1_6"/>
<dbReference type="Proteomes" id="UP000001006">
    <property type="component" value="Chromosome"/>
</dbReference>
<dbReference type="Proteomes" id="UP000002673">
    <property type="component" value="Chromosome"/>
</dbReference>
<dbReference type="InterPro" id="IPR010710">
    <property type="entry name" value="DUF1289"/>
</dbReference>
<dbReference type="PANTHER" id="PTHR35175">
    <property type="entry name" value="DUF1289 DOMAIN-CONTAINING PROTEIN"/>
    <property type="match status" value="1"/>
</dbReference>
<dbReference type="PANTHER" id="PTHR35175:SF1">
    <property type="entry name" value="OXIDOREDUCTASE"/>
    <property type="match status" value="1"/>
</dbReference>
<dbReference type="Pfam" id="PF06945">
    <property type="entry name" value="DUF1289"/>
    <property type="match status" value="1"/>
</dbReference>